<organism>
    <name type="scientific">Mus musculus</name>
    <name type="common">Mouse</name>
    <dbReference type="NCBI Taxonomy" id="10090"/>
    <lineage>
        <taxon>Eukaryota</taxon>
        <taxon>Metazoa</taxon>
        <taxon>Chordata</taxon>
        <taxon>Craniata</taxon>
        <taxon>Vertebrata</taxon>
        <taxon>Euteleostomi</taxon>
        <taxon>Mammalia</taxon>
        <taxon>Eutheria</taxon>
        <taxon>Euarchontoglires</taxon>
        <taxon>Glires</taxon>
        <taxon>Rodentia</taxon>
        <taxon>Myomorpha</taxon>
        <taxon>Muroidea</taxon>
        <taxon>Muridae</taxon>
        <taxon>Murinae</taxon>
        <taxon>Mus</taxon>
        <taxon>Mus</taxon>
    </lineage>
</organism>
<name>PLCH1_MOUSE</name>
<dbReference type="EC" id="3.1.4.11" evidence="2"/>
<dbReference type="EMBL" id="AY691172">
    <property type="protein sequence ID" value="AAW22609.1"/>
    <property type="molecule type" value="mRNA"/>
</dbReference>
<dbReference type="EMBL" id="AY691173">
    <property type="protein sequence ID" value="AAW22610.1"/>
    <property type="molecule type" value="mRNA"/>
</dbReference>
<dbReference type="EMBL" id="AY691174">
    <property type="protein sequence ID" value="AAW22611.1"/>
    <property type="molecule type" value="mRNA"/>
</dbReference>
<dbReference type="EMBL" id="BC042549">
    <property type="protein sequence ID" value="AAH42549.1"/>
    <property type="molecule type" value="mRNA"/>
</dbReference>
<dbReference type="EMBL" id="BC052372">
    <property type="protein sequence ID" value="AAH52372.1"/>
    <property type="molecule type" value="mRNA"/>
</dbReference>
<dbReference type="EMBL" id="BC055005">
    <property type="protein sequence ID" value="AAH55005.1"/>
    <property type="molecule type" value="mRNA"/>
</dbReference>
<dbReference type="EMBL" id="AK173095">
    <property type="protein sequence ID" value="BAD32373.1"/>
    <property type="molecule type" value="mRNA"/>
</dbReference>
<dbReference type="CCDS" id="CCDS38444.2">
    <molecule id="Q4KWH5-1"/>
</dbReference>
<dbReference type="CCDS" id="CCDS50918.1">
    <molecule id="Q4KWH5-3"/>
</dbReference>
<dbReference type="CCDS" id="CCDS57215.1">
    <molecule id="Q4KWH5-4"/>
</dbReference>
<dbReference type="RefSeq" id="NP_001171203.1">
    <molecule id="Q4KWH5-4"/>
    <property type="nucleotide sequence ID" value="NM_001177732.2"/>
</dbReference>
<dbReference type="RefSeq" id="NP_001171204.1">
    <molecule id="Q4KWH5-3"/>
    <property type="nucleotide sequence ID" value="NM_001177733.2"/>
</dbReference>
<dbReference type="RefSeq" id="NP_899014.2">
    <molecule id="Q4KWH5-1"/>
    <property type="nucleotide sequence ID" value="NM_183191.4"/>
</dbReference>
<dbReference type="SMR" id="Q4KWH5"/>
<dbReference type="BioGRID" id="234654">
    <property type="interactions" value="1"/>
</dbReference>
<dbReference type="FunCoup" id="Q4KWH5">
    <property type="interactions" value="1114"/>
</dbReference>
<dbReference type="STRING" id="10090.ENSMUSP00000081122"/>
<dbReference type="GlyGen" id="Q4KWH5">
    <property type="glycosylation" value="2 sites"/>
</dbReference>
<dbReference type="iPTMnet" id="Q4KWH5"/>
<dbReference type="PhosphoSitePlus" id="Q4KWH5"/>
<dbReference type="PaxDb" id="10090-ENSMUSP00000081122"/>
<dbReference type="PeptideAtlas" id="Q4KWH5"/>
<dbReference type="ProteomicsDB" id="289531">
    <molecule id="Q4KWH5-1"/>
</dbReference>
<dbReference type="ProteomicsDB" id="289532">
    <molecule id="Q4KWH5-2"/>
</dbReference>
<dbReference type="ProteomicsDB" id="289533">
    <molecule id="Q4KWH5-3"/>
</dbReference>
<dbReference type="ProteomicsDB" id="289534">
    <molecule id="Q4KWH5-4"/>
</dbReference>
<dbReference type="ProteomicsDB" id="289535">
    <molecule id="Q4KWH5-5"/>
</dbReference>
<dbReference type="Antibodypedia" id="46750">
    <property type="antibodies" value="84 antibodies from 24 providers"/>
</dbReference>
<dbReference type="DNASU" id="269437"/>
<dbReference type="Ensembl" id="ENSMUST00000084105.12">
    <molecule id="Q4KWH5-1"/>
    <property type="protein sequence ID" value="ENSMUSP00000081122.6"/>
    <property type="gene ID" value="ENSMUSG00000036834.18"/>
</dbReference>
<dbReference type="Ensembl" id="ENSMUST00000159676.9">
    <molecule id="Q4KWH5-3"/>
    <property type="protein sequence ID" value="ENSMUSP00000124632.3"/>
    <property type="gene ID" value="ENSMUSG00000036834.18"/>
</dbReference>
<dbReference type="Ensembl" id="ENSMUST00000162269.9">
    <molecule id="Q4KWH5-4"/>
    <property type="protein sequence ID" value="ENSMUSP00000124463.3"/>
    <property type="gene ID" value="ENSMUSG00000036834.18"/>
</dbReference>
<dbReference type="GeneID" id="269437"/>
<dbReference type="KEGG" id="mmu:269437"/>
<dbReference type="UCSC" id="uc008pju.2">
    <molecule id="Q4KWH5-5"/>
    <property type="organism name" value="mouse"/>
</dbReference>
<dbReference type="UCSC" id="uc008pjv.2">
    <molecule id="Q4KWH5-2"/>
    <property type="organism name" value="mouse"/>
</dbReference>
<dbReference type="UCSC" id="uc033htw.1">
    <molecule id="Q4KWH5-4"/>
    <property type="organism name" value="mouse"/>
</dbReference>
<dbReference type="UCSC" id="uc033htx.1">
    <molecule id="Q4KWH5-3"/>
    <property type="organism name" value="mouse"/>
</dbReference>
<dbReference type="UCSC" id="uc033hty.1">
    <molecule id="Q4KWH5-1"/>
    <property type="organism name" value="mouse"/>
</dbReference>
<dbReference type="AGR" id="MGI:2683547"/>
<dbReference type="CTD" id="23007"/>
<dbReference type="MGI" id="MGI:2683547">
    <property type="gene designation" value="Plch1"/>
</dbReference>
<dbReference type="VEuPathDB" id="HostDB:ENSMUSG00000036834"/>
<dbReference type="eggNOG" id="KOG0169">
    <property type="taxonomic scope" value="Eukaryota"/>
</dbReference>
<dbReference type="GeneTree" id="ENSGT00940000157185"/>
<dbReference type="HOGENOM" id="CLU_002738_4_0_1"/>
<dbReference type="InParanoid" id="Q4KWH5"/>
<dbReference type="OMA" id="CRTAKCR"/>
<dbReference type="OrthoDB" id="269822at2759"/>
<dbReference type="PhylomeDB" id="Q4KWH5"/>
<dbReference type="TreeFam" id="TF313216"/>
<dbReference type="BRENDA" id="3.1.4.11">
    <property type="organism ID" value="3474"/>
</dbReference>
<dbReference type="Reactome" id="R-MMU-1855204">
    <property type="pathway name" value="Synthesis of IP3 and IP4 in the cytosol"/>
</dbReference>
<dbReference type="BioGRID-ORCS" id="269437">
    <property type="hits" value="4 hits in 79 CRISPR screens"/>
</dbReference>
<dbReference type="ChiTaRS" id="Plch1">
    <property type="organism name" value="mouse"/>
</dbReference>
<dbReference type="PRO" id="PR:Q4KWH5"/>
<dbReference type="Proteomes" id="UP000000589">
    <property type="component" value="Chromosome 3"/>
</dbReference>
<dbReference type="RNAct" id="Q4KWH5">
    <property type="molecule type" value="protein"/>
</dbReference>
<dbReference type="Bgee" id="ENSMUSG00000036834">
    <property type="expression patterns" value="Expressed in optic fissure and 156 other cell types or tissues"/>
</dbReference>
<dbReference type="ExpressionAtlas" id="Q4KWH5">
    <property type="expression patterns" value="baseline and differential"/>
</dbReference>
<dbReference type="GO" id="GO:0005737">
    <property type="term" value="C:cytoplasm"/>
    <property type="evidence" value="ECO:0000266"/>
    <property type="project" value="MGI"/>
</dbReference>
<dbReference type="GO" id="GO:0005829">
    <property type="term" value="C:cytosol"/>
    <property type="evidence" value="ECO:0000314"/>
    <property type="project" value="MGI"/>
</dbReference>
<dbReference type="GO" id="GO:0043231">
    <property type="term" value="C:intracellular membrane-bounded organelle"/>
    <property type="evidence" value="ECO:0007669"/>
    <property type="project" value="Ensembl"/>
</dbReference>
<dbReference type="GO" id="GO:0016020">
    <property type="term" value="C:membrane"/>
    <property type="evidence" value="ECO:0000314"/>
    <property type="project" value="MGI"/>
</dbReference>
<dbReference type="GO" id="GO:0005509">
    <property type="term" value="F:calcium ion binding"/>
    <property type="evidence" value="ECO:0007669"/>
    <property type="project" value="InterPro"/>
</dbReference>
<dbReference type="GO" id="GO:0050429">
    <property type="term" value="F:calcium-dependent phospholipase C activity"/>
    <property type="evidence" value="ECO:0000266"/>
    <property type="project" value="MGI"/>
</dbReference>
<dbReference type="GO" id="GO:0004435">
    <property type="term" value="F:phosphatidylinositol-4,5-bisphosphate phospholipase C activity"/>
    <property type="evidence" value="ECO:0007669"/>
    <property type="project" value="UniProtKB-EC"/>
</dbReference>
<dbReference type="GO" id="GO:0035556">
    <property type="term" value="P:intracellular signal transduction"/>
    <property type="evidence" value="ECO:0007669"/>
    <property type="project" value="InterPro"/>
</dbReference>
<dbReference type="GO" id="GO:0016042">
    <property type="term" value="P:lipid catabolic process"/>
    <property type="evidence" value="ECO:0007669"/>
    <property type="project" value="UniProtKB-KW"/>
</dbReference>
<dbReference type="CDD" id="cd00275">
    <property type="entry name" value="C2_PLC_like"/>
    <property type="match status" value="1"/>
</dbReference>
<dbReference type="CDD" id="cd16220">
    <property type="entry name" value="EFh_PI-PLCeta1"/>
    <property type="match status" value="1"/>
</dbReference>
<dbReference type="CDD" id="cd08632">
    <property type="entry name" value="PI-PLCc_eta1"/>
    <property type="match status" value="1"/>
</dbReference>
<dbReference type="FunFam" id="1.10.238.10:FF:000005">
    <property type="entry name" value="Phosphoinositide phospholipase C"/>
    <property type="match status" value="1"/>
</dbReference>
<dbReference type="FunFam" id="1.10.238.10:FF:000036">
    <property type="entry name" value="Phosphoinositide phospholipase C"/>
    <property type="match status" value="1"/>
</dbReference>
<dbReference type="FunFam" id="2.30.29.30:FF:000063">
    <property type="entry name" value="Phosphoinositide phospholipase C"/>
    <property type="match status" value="1"/>
</dbReference>
<dbReference type="FunFam" id="2.60.40.150:FF:000018">
    <property type="entry name" value="Phosphoinositide phospholipase C"/>
    <property type="match status" value="1"/>
</dbReference>
<dbReference type="FunFam" id="3.20.20.190:FF:000002">
    <property type="entry name" value="Phosphoinositide phospholipase C"/>
    <property type="match status" value="1"/>
</dbReference>
<dbReference type="FunFam" id="3.20.20.190:FF:000066">
    <property type="entry name" value="Phosphoinositide phospholipase C"/>
    <property type="match status" value="1"/>
</dbReference>
<dbReference type="Gene3D" id="2.60.40.150">
    <property type="entry name" value="C2 domain"/>
    <property type="match status" value="1"/>
</dbReference>
<dbReference type="Gene3D" id="1.10.238.10">
    <property type="entry name" value="EF-hand"/>
    <property type="match status" value="2"/>
</dbReference>
<dbReference type="Gene3D" id="3.20.20.190">
    <property type="entry name" value="Phosphatidylinositol (PI) phosphodiesterase"/>
    <property type="match status" value="2"/>
</dbReference>
<dbReference type="Gene3D" id="2.30.29.30">
    <property type="entry name" value="Pleckstrin-homology domain (PH domain)/Phosphotyrosine-binding domain (PTB)"/>
    <property type="match status" value="1"/>
</dbReference>
<dbReference type="InterPro" id="IPR000008">
    <property type="entry name" value="C2_dom"/>
</dbReference>
<dbReference type="InterPro" id="IPR035892">
    <property type="entry name" value="C2_domain_sf"/>
</dbReference>
<dbReference type="InterPro" id="IPR011992">
    <property type="entry name" value="EF-hand-dom_pair"/>
</dbReference>
<dbReference type="InterPro" id="IPR018247">
    <property type="entry name" value="EF_Hand_1_Ca_BS"/>
</dbReference>
<dbReference type="InterPro" id="IPR002048">
    <property type="entry name" value="EF_hand_dom"/>
</dbReference>
<dbReference type="InterPro" id="IPR011993">
    <property type="entry name" value="PH-like_dom_sf"/>
</dbReference>
<dbReference type="InterPro" id="IPR001849">
    <property type="entry name" value="PH_domain"/>
</dbReference>
<dbReference type="InterPro" id="IPR001192">
    <property type="entry name" value="PI-PLC_fam"/>
</dbReference>
<dbReference type="InterPro" id="IPR028392">
    <property type="entry name" value="PLC-eta1_cat"/>
</dbReference>
<dbReference type="InterPro" id="IPR017946">
    <property type="entry name" value="PLC-like_Pdiesterase_TIM-brl"/>
</dbReference>
<dbReference type="InterPro" id="IPR015359">
    <property type="entry name" value="PLC_EF-hand-like"/>
</dbReference>
<dbReference type="InterPro" id="IPR046972">
    <property type="entry name" value="PLCeta1_EF"/>
</dbReference>
<dbReference type="InterPro" id="IPR000909">
    <property type="entry name" value="PLipase_C_PInositol-sp_X_dom"/>
</dbReference>
<dbReference type="InterPro" id="IPR001711">
    <property type="entry name" value="PLipase_C_Pinositol-sp_Y"/>
</dbReference>
<dbReference type="PANTHER" id="PTHR10336:SF51">
    <property type="entry name" value="1-PHOSPHATIDYLINOSITOL 4,5-BISPHOSPHATE PHOSPHODIESTERASE ETA-1"/>
    <property type="match status" value="1"/>
</dbReference>
<dbReference type="PANTHER" id="PTHR10336">
    <property type="entry name" value="PHOSPHOINOSITIDE-SPECIFIC PHOSPHOLIPASE C FAMILY PROTEIN"/>
    <property type="match status" value="1"/>
</dbReference>
<dbReference type="Pfam" id="PF00168">
    <property type="entry name" value="C2"/>
    <property type="match status" value="1"/>
</dbReference>
<dbReference type="Pfam" id="PF09279">
    <property type="entry name" value="EF-hand_like"/>
    <property type="match status" value="1"/>
</dbReference>
<dbReference type="Pfam" id="PF16457">
    <property type="entry name" value="PH_12"/>
    <property type="match status" value="1"/>
</dbReference>
<dbReference type="Pfam" id="PF00388">
    <property type="entry name" value="PI-PLC-X"/>
    <property type="match status" value="1"/>
</dbReference>
<dbReference type="Pfam" id="PF00387">
    <property type="entry name" value="PI-PLC-Y"/>
    <property type="match status" value="1"/>
</dbReference>
<dbReference type="PRINTS" id="PR00390">
    <property type="entry name" value="PHPHLIPASEC"/>
</dbReference>
<dbReference type="SMART" id="SM00239">
    <property type="entry name" value="C2"/>
    <property type="match status" value="1"/>
</dbReference>
<dbReference type="SMART" id="SM00054">
    <property type="entry name" value="EFh"/>
    <property type="match status" value="2"/>
</dbReference>
<dbReference type="SMART" id="SM00233">
    <property type="entry name" value="PH"/>
    <property type="match status" value="1"/>
</dbReference>
<dbReference type="SMART" id="SM00148">
    <property type="entry name" value="PLCXc"/>
    <property type="match status" value="1"/>
</dbReference>
<dbReference type="SMART" id="SM00149">
    <property type="entry name" value="PLCYc"/>
    <property type="match status" value="1"/>
</dbReference>
<dbReference type="SUPFAM" id="SSF49562">
    <property type="entry name" value="C2 domain (Calcium/lipid-binding domain, CaLB)"/>
    <property type="match status" value="1"/>
</dbReference>
<dbReference type="SUPFAM" id="SSF47473">
    <property type="entry name" value="EF-hand"/>
    <property type="match status" value="1"/>
</dbReference>
<dbReference type="SUPFAM" id="SSF50729">
    <property type="entry name" value="PH domain-like"/>
    <property type="match status" value="1"/>
</dbReference>
<dbReference type="SUPFAM" id="SSF51695">
    <property type="entry name" value="PLC-like phosphodiesterases"/>
    <property type="match status" value="1"/>
</dbReference>
<dbReference type="PROSITE" id="PS50004">
    <property type="entry name" value="C2"/>
    <property type="match status" value="1"/>
</dbReference>
<dbReference type="PROSITE" id="PS00018">
    <property type="entry name" value="EF_HAND_1"/>
    <property type="match status" value="1"/>
</dbReference>
<dbReference type="PROSITE" id="PS50222">
    <property type="entry name" value="EF_HAND_2"/>
    <property type="match status" value="3"/>
</dbReference>
<dbReference type="PROSITE" id="PS50003">
    <property type="entry name" value="PH_DOMAIN"/>
    <property type="match status" value="1"/>
</dbReference>
<dbReference type="PROSITE" id="PS50007">
    <property type="entry name" value="PIPLC_X_DOMAIN"/>
    <property type="match status" value="1"/>
</dbReference>
<dbReference type="PROSITE" id="PS50008">
    <property type="entry name" value="PIPLC_Y_DOMAIN"/>
    <property type="match status" value="1"/>
</dbReference>
<sequence>MADLEVYKNLSPEKVERCMSVMQSGTQMIKLKRGTKGLVRLFYLDEHRTRLRWRPSRKSEKAKILIDSIYKVTEGRQSEIFHRQAEGNFDPSCCFTIYHGNHMESLDLITSNPEEARTWITGLKYLMAGISDEDSLAKRQRTHDQWVKQTFEEADKNGDGLLNIEEIHQLMHKLNVNLPRRKVRQMFQEADTDENQGTLTFEEFCVFYKMMSLRRDLYLLLLSYSDKKDHLTVEELAQFLKVEQKMSNVTLDYCLDIIMKFEVSEENKVKNVLGIEGFTNFMRSPACDVFNPLHHEVYQDMDQPLCNYYIASSHNTYLTGDQLLSQSKVDMYARVLQEGCRCVEVDCWDGPDGEPVVHHGYTLTSKILFRDVVETINKHAFVKNEFPVILSIENHCSIQQQRKIAQYLKGILQDKLDLSSVDTGECRQLPSPQSLKGKILVKGKKLPYHLGDDAEEGEVSDEDSADEIEDECKFKLHYSNGTTEHQVESFIRKKLESLLKESQIRDKEDPDSFTVRALLKATHEGLNAHLKQNLDVKESGKKSHGRSLMANFGKHKQKATKSRSKSYSTDDEDDSLQNPGKEGGQLYRLGRRRRTMKLCRELSDLVVYTNSVAAQDIVDDGTTGNVLSFSETRAHQVVQQKSEQFMIYNQKQLTRIYPSAYRIDSSNFNPLPYWNAGCQLVALNYQSEGRMMQINRAKFKANGNCGYILKPQQMCKGTFNPFSGDPLPANPKKQLILKVISGQQLPKPPDSMFGDRGEIIDPFVEVEIIGLPVDCCKDQTRVVDDNGFNPVWEETLTFTVHMPEIALVRFLVWDHDPIGRDFVGQRTVTFSSLVPGYRHVYLEGLTEASIFVHITINEIFGKWSPLILNPSYTILHFLGATKNRQLQGLKGLFNKNPRHASSENNSHYVRKRSIGDRILRRTASAPAKGRKKSKVGFQEMVEIKDSVSEASRDQDGVLRRTTRSLQVRPVSMPVDKSLLGALSLPISEAAKDTDGKENCLAGDKDDRRKGAATRKDPHFSNFNKKLSSSSSALLHKDANQGPTASVSNPEQCGGRGAKSERIKPNMTNDCQENHNPPKFLSPRKHLALDPATKGLQERLHGMKTNEKEHAEGFLGEKSMLSGSVLSQSSLEVENLEGSRAKGRAATSFSLSDVSALCSDIPDLHSTAILQDTEISNLIDDVTLTNENQSGSSISALIGQFEESNHPANVTVVSHLSTSGASGSAPFQTPFKHGLSQGNQKASFLCSSPELNKLSSVETTKLANNAVPCGVIGSPISTPKPGDDPSDKAKTRVIEGNLPGFPDASPGQFPKSPTHGEDHSQVMNSPALSTELAIEDIIADPALSINSAESSLVEIDGESENLSLTTCDYREEAPSQLVSPLKLQQSQEMVEHIQRGLRNGYCKETLLPSEIFNNIPGVKNHSISHLTYQGAGFVYNHFSSSDAKTNQICEPQQPRAPDMHAPTPTPSTHAPLAALKLPSPCKSKSLGDLTSEDIACNFESKYQCISRSFVTNGIRDKSVTMKTKSLEPLDALTEQLRKLVSFDQEDSCQVLYSKQDVNQCPRALVRKLSSRSQSRVRNIASRAKEKQEAGKQKAMAQSTRGGVVLRSKPPAPALAVNRHSTGSYIASYLRNMKAGGLEGRGIPEGACTALRYGYMDQFCSDNSVLQTEPSSEDKPEIYFLLRL</sequence>
<reference key="1">
    <citation type="journal article" date="2005" name="Biochem. J.">
        <title>Molecular cloning and characterization of a novel phospholipase C, PLC-eta.</title>
        <authorList>
            <person name="Hwang J.-I."/>
            <person name="Oh Y.-S."/>
            <person name="Shin K.-J."/>
            <person name="Kim H."/>
            <person name="Ryu S.H."/>
            <person name="Suh P.-G."/>
        </authorList>
    </citation>
    <scope>NUCLEOTIDE SEQUENCE [MRNA] (ISOFORMS 1; 3 AND 4)</scope>
    <scope>TISSUE SPECIFICITY</scope>
    <scope>FUNCTION</scope>
</reference>
<reference key="2">
    <citation type="journal article" date="2004" name="Genome Res.">
        <title>The status, quality, and expansion of the NIH full-length cDNA project: the Mammalian Gene Collection (MGC).</title>
        <authorList>
            <consortium name="The MGC Project Team"/>
        </authorList>
    </citation>
    <scope>NUCLEOTIDE SEQUENCE [LARGE SCALE MRNA] (ISOFORMS 2 AND 5)</scope>
    <source>
        <tissue>Eye</tissue>
    </source>
</reference>
<reference key="3">
    <citation type="journal article" date="2004" name="DNA Res.">
        <title>Prediction of the coding sequences of mouse homologues of KIAA gene: IV. The complete nucleotide sequences of 500 mouse KIAA-homologous cDNAs identified by screening of terminal sequences of cDNA clones randomly sampled from size-fractionated libraries.</title>
        <authorList>
            <person name="Okazaki N."/>
            <person name="Kikuno R."/>
            <person name="Ohara R."/>
            <person name="Inamoto S."/>
            <person name="Koseki H."/>
            <person name="Hiraoka S."/>
            <person name="Saga Y."/>
            <person name="Seino S."/>
            <person name="Nishimura M."/>
            <person name="Kaisho T."/>
            <person name="Hoshino K."/>
            <person name="Kitamura H."/>
            <person name="Nagase T."/>
            <person name="Ohara O."/>
            <person name="Koga H."/>
        </authorList>
    </citation>
    <scope>NUCLEOTIDE SEQUENCE [LARGE SCALE MRNA] OF 373-1682 (ISOFORM 2)</scope>
    <source>
        <tissue>Fetal brain</tissue>
    </source>
</reference>
<proteinExistence type="evidence at transcript level"/>
<gene>
    <name evidence="14" type="primary">Plch1</name>
    <name type="synonym">Kiaa1069</name>
    <name type="synonym">Plcl3</name>
</gene>
<keyword id="KW-0025">Alternative splicing</keyword>
<keyword id="KW-0106">Calcium</keyword>
<keyword id="KW-0963">Cytoplasm</keyword>
<keyword id="KW-0378">Hydrolase</keyword>
<keyword id="KW-0442">Lipid degradation</keyword>
<keyword id="KW-0443">Lipid metabolism</keyword>
<keyword id="KW-0472">Membrane</keyword>
<keyword id="KW-0479">Metal-binding</keyword>
<keyword id="KW-1185">Reference proteome</keyword>
<keyword id="KW-0677">Repeat</keyword>
<keyword id="KW-0807">Transducer</keyword>
<accession>Q4KWH5</accession>
<accession>Q4KWH6</accession>
<accession>Q4KWH7</accession>
<accession>Q69ZS3</accession>
<accession>Q7TPQ1</accession>
<accession>Q8CFQ2</accession>
<comment type="function">
    <text evidence="9">The production of the second messenger molecules diacylglycerol (DAG) and inositol 1,4,5-trisphosphate (IP3) is mediated by calcium-activated phosphatidylinositol-specific phospholipase C enzymes.</text>
</comment>
<comment type="catalytic activity">
    <reaction evidence="2">
        <text>a 1,2-diacyl-sn-glycero-3-phospho-(1D-myo-inositol-4,5-bisphosphate) + H2O = 1D-myo-inositol 1,4,5-trisphosphate + a 1,2-diacyl-sn-glycerol + H(+)</text>
        <dbReference type="Rhea" id="RHEA:33179"/>
        <dbReference type="ChEBI" id="CHEBI:15377"/>
        <dbReference type="ChEBI" id="CHEBI:15378"/>
        <dbReference type="ChEBI" id="CHEBI:17815"/>
        <dbReference type="ChEBI" id="CHEBI:58456"/>
        <dbReference type="ChEBI" id="CHEBI:203600"/>
        <dbReference type="EC" id="3.1.4.11"/>
    </reaction>
    <physiologicalReaction direction="left-to-right" evidence="2">
        <dbReference type="Rhea" id="RHEA:33180"/>
    </physiologicalReaction>
</comment>
<comment type="cofactor">
    <cofactor evidence="3">
        <name>Ca(2+)</name>
        <dbReference type="ChEBI" id="CHEBI:29108"/>
    </cofactor>
</comment>
<comment type="subcellular location">
    <subcellularLocation>
        <location evidence="2">Cytoplasm</location>
    </subcellularLocation>
    <subcellularLocation>
        <location evidence="2">Membrane</location>
    </subcellularLocation>
</comment>
<comment type="alternative products">
    <event type="alternative splicing"/>
    <isoform>
        <id>Q4KWH5-1</id>
        <name>1</name>
        <name>PLC-eta-1</name>
        <sequence type="displayed"/>
    </isoform>
    <isoform>
        <id>Q4KWH5-2</id>
        <name>2</name>
        <sequence type="described" ref="VSP_032908 VSP_032909 VSP_032911"/>
    </isoform>
    <isoform>
        <id>Q4KWH5-3</id>
        <name>3</name>
        <name>PLC-eta-1b</name>
        <sequence type="described" ref="VSP_032912 VSP_032915"/>
    </isoform>
    <isoform>
        <id>Q4KWH5-4</id>
        <name>4</name>
        <name>PLC-eta-1a</name>
        <sequence type="described" ref="VSP_032913 VSP_032914"/>
    </isoform>
    <isoform>
        <id>Q4KWH5-5</id>
        <name>5</name>
        <sequence type="described" ref="VSP_032907 VSP_032910 VSP_032911 VSP_032912 VSP_032915"/>
    </isoform>
</comment>
<comment type="tissue specificity">
    <text evidence="9">Expressed in brain and to a lower extent in lung. In brain, it is found in cerebrum, cerebellum and spinal cord.</text>
</comment>
<evidence type="ECO:0000250" key="1"/>
<evidence type="ECO:0000250" key="2">
    <source>
        <dbReference type="UniProtKB" id="Q4KWH8"/>
    </source>
</evidence>
<evidence type="ECO:0000255" key="3">
    <source>
        <dbReference type="PROSITE-ProRule" id="PRU00041"/>
    </source>
</evidence>
<evidence type="ECO:0000255" key="4">
    <source>
        <dbReference type="PROSITE-ProRule" id="PRU00145"/>
    </source>
</evidence>
<evidence type="ECO:0000255" key="5">
    <source>
        <dbReference type="PROSITE-ProRule" id="PRU00270"/>
    </source>
</evidence>
<evidence type="ECO:0000255" key="6">
    <source>
        <dbReference type="PROSITE-ProRule" id="PRU00271"/>
    </source>
</evidence>
<evidence type="ECO:0000255" key="7">
    <source>
        <dbReference type="PROSITE-ProRule" id="PRU00448"/>
    </source>
</evidence>
<evidence type="ECO:0000256" key="8">
    <source>
        <dbReference type="SAM" id="MobiDB-lite"/>
    </source>
</evidence>
<evidence type="ECO:0000269" key="9">
    <source>
    </source>
</evidence>
<evidence type="ECO:0000303" key="10">
    <source>
    </source>
</evidence>
<evidence type="ECO:0000303" key="11">
    <source>
    </source>
</evidence>
<evidence type="ECO:0000303" key="12">
    <source>
    </source>
</evidence>
<evidence type="ECO:0000305" key="13"/>
<evidence type="ECO:0000312" key="14">
    <source>
        <dbReference type="MGI" id="MGI:2683547"/>
    </source>
</evidence>
<protein>
    <recommendedName>
        <fullName evidence="13">1-phosphatidylinositol 4,5-bisphosphate phosphodiesterase eta-1</fullName>
        <ecNumber evidence="2">3.1.4.11</ecNumber>
    </recommendedName>
    <alternativeName>
        <fullName>Phosphoinositide phospholipase C-eta-1</fullName>
    </alternativeName>
    <alternativeName>
        <fullName>Phospholipase C-eta-1</fullName>
        <shortName>PLC-eta-1</shortName>
    </alternativeName>
    <alternativeName>
        <fullName>Phospholipase C-like protein 3</fullName>
        <shortName>PLC-L3</shortName>
    </alternativeName>
</protein>
<feature type="chain" id="PRO_0000329008" description="1-phosphatidylinositol 4,5-bisphosphate phosphodiesterase eta-1">
    <location>
        <begin position="1"/>
        <end position="1682"/>
    </location>
</feature>
<feature type="domain" description="PH" evidence="4">
    <location>
        <begin position="20"/>
        <end position="128"/>
    </location>
</feature>
<feature type="domain" description="EF-hand 1" evidence="7">
    <location>
        <begin position="142"/>
        <end position="177"/>
    </location>
</feature>
<feature type="domain" description="EF-hand 2" evidence="7">
    <location>
        <begin position="178"/>
        <end position="214"/>
    </location>
</feature>
<feature type="domain" description="EF-hand 3" evidence="7">
    <location>
        <begin position="226"/>
        <end position="246"/>
    </location>
</feature>
<feature type="domain" description="PI-PLC X-box" evidence="5">
    <location>
        <begin position="299"/>
        <end position="444"/>
    </location>
</feature>
<feature type="domain" description="PI-PLC Y-box" evidence="6">
    <location>
        <begin position="602"/>
        <end position="715"/>
    </location>
</feature>
<feature type="domain" description="C2" evidence="3">
    <location>
        <begin position="716"/>
        <end position="844"/>
    </location>
</feature>
<feature type="region of interest" description="Disordered" evidence="8">
    <location>
        <begin position="534"/>
        <end position="588"/>
    </location>
</feature>
<feature type="region of interest" description="Disordered" evidence="8">
    <location>
        <begin position="992"/>
        <end position="1083"/>
    </location>
</feature>
<feature type="region of interest" description="Disordered" evidence="8">
    <location>
        <begin position="1296"/>
        <end position="1321"/>
    </location>
</feature>
<feature type="region of interest" description="Disordered" evidence="8">
    <location>
        <begin position="1581"/>
        <end position="1603"/>
    </location>
</feature>
<feature type="compositionally biased region" description="Basic residues" evidence="8">
    <location>
        <begin position="553"/>
        <end position="564"/>
    </location>
</feature>
<feature type="compositionally biased region" description="Basic and acidic residues" evidence="8">
    <location>
        <begin position="992"/>
        <end position="1018"/>
    </location>
</feature>
<feature type="compositionally biased region" description="Low complexity" evidence="8">
    <location>
        <begin position="1019"/>
        <end position="1033"/>
    </location>
</feature>
<feature type="compositionally biased region" description="Polar residues" evidence="8">
    <location>
        <begin position="1040"/>
        <end position="1050"/>
    </location>
</feature>
<feature type="compositionally biased region" description="Polar residues" evidence="8">
    <location>
        <begin position="1065"/>
        <end position="1074"/>
    </location>
</feature>
<feature type="compositionally biased region" description="Basic and acidic residues" evidence="8">
    <location>
        <begin position="1581"/>
        <end position="1590"/>
    </location>
</feature>
<feature type="active site" evidence="5">
    <location>
        <position position="314"/>
    </location>
</feature>
<feature type="active site" evidence="5">
    <location>
        <position position="358"/>
    </location>
</feature>
<feature type="binding site" evidence="7">
    <location>
        <position position="155"/>
    </location>
    <ligand>
        <name>Ca(2+)</name>
        <dbReference type="ChEBI" id="CHEBI:29108"/>
        <label>1</label>
    </ligand>
</feature>
<feature type="binding site" evidence="7">
    <location>
        <position position="157"/>
    </location>
    <ligand>
        <name>Ca(2+)</name>
        <dbReference type="ChEBI" id="CHEBI:29108"/>
        <label>1</label>
    </ligand>
</feature>
<feature type="binding site" evidence="7">
    <location>
        <position position="159"/>
    </location>
    <ligand>
        <name>Ca(2+)</name>
        <dbReference type="ChEBI" id="CHEBI:29108"/>
        <label>1</label>
    </ligand>
</feature>
<feature type="binding site" evidence="7">
    <location>
        <position position="166"/>
    </location>
    <ligand>
        <name>Ca(2+)</name>
        <dbReference type="ChEBI" id="CHEBI:29108"/>
        <label>1</label>
    </ligand>
</feature>
<feature type="binding site" evidence="1">
    <location>
        <position position="315"/>
    </location>
    <ligand>
        <name>Ca(2+)</name>
        <dbReference type="ChEBI" id="CHEBI:29108"/>
        <label>2</label>
        <note>catalytic</note>
    </ligand>
</feature>
<feature type="binding site" evidence="1">
    <location>
        <position position="344"/>
    </location>
    <ligand>
        <name>Ca(2+)</name>
        <dbReference type="ChEBI" id="CHEBI:29108"/>
        <label>2</label>
        <note>catalytic</note>
    </ligand>
</feature>
<feature type="binding site" evidence="1">
    <location>
        <position position="346"/>
    </location>
    <ligand>
        <name>Ca(2+)</name>
        <dbReference type="ChEBI" id="CHEBI:29108"/>
        <label>2</label>
        <note>catalytic</note>
    </ligand>
</feature>
<feature type="binding site" evidence="1">
    <location>
        <position position="393"/>
    </location>
    <ligand>
        <name>Ca(2+)</name>
        <dbReference type="ChEBI" id="CHEBI:29108"/>
        <label>2</label>
        <note>catalytic</note>
    </ligand>
</feature>
<feature type="binding site" evidence="1">
    <location>
        <position position="442"/>
    </location>
    <ligand>
        <name>substrate</name>
    </ligand>
</feature>
<feature type="binding site" evidence="1">
    <location>
        <position position="444"/>
    </location>
    <ligand>
        <name>substrate</name>
    </ligand>
</feature>
<feature type="binding site" evidence="1">
    <location>
        <position position="628"/>
    </location>
    <ligand>
        <name>substrate</name>
    </ligand>
</feature>
<feature type="binding site" evidence="1">
    <location>
        <position position="655"/>
    </location>
    <ligand>
        <name>substrate</name>
    </ligand>
</feature>
<feature type="binding site" evidence="1">
    <location>
        <position position="759"/>
    </location>
    <ligand>
        <name>Ca(2+)</name>
        <dbReference type="ChEBI" id="CHEBI:29108"/>
        <label>3</label>
    </ligand>
</feature>
<feature type="binding site" evidence="1">
    <location>
        <position position="761"/>
    </location>
    <ligand>
        <name>Ca(2+)</name>
        <dbReference type="ChEBI" id="CHEBI:29108"/>
        <label>3</label>
    </ligand>
</feature>
<feature type="binding site" evidence="1">
    <location>
        <position position="785"/>
    </location>
    <ligand>
        <name>Ca(2+)</name>
        <dbReference type="ChEBI" id="CHEBI:29108"/>
        <label>3</label>
    </ligand>
</feature>
<feature type="binding site" evidence="1">
    <location>
        <position position="814"/>
    </location>
    <ligand>
        <name>Ca(2+)</name>
        <dbReference type="ChEBI" id="CHEBI:29108"/>
        <label>4</label>
    </ligand>
</feature>
<feature type="binding site" evidence="1">
    <location>
        <position position="815"/>
    </location>
    <ligand>
        <name>Ca(2+)</name>
        <dbReference type="ChEBI" id="CHEBI:29108"/>
        <label>4</label>
    </ligand>
</feature>
<feature type="binding site" evidence="1">
    <location>
        <position position="816"/>
    </location>
    <ligand>
        <name>Ca(2+)</name>
        <dbReference type="ChEBI" id="CHEBI:29108"/>
        <label>4</label>
    </ligand>
</feature>
<feature type="splice variant" id="VSP_032907" description="In isoform 5." evidence="11">
    <location>
        <begin position="1"/>
        <end position="563"/>
    </location>
</feature>
<feature type="splice variant" id="VSP_032908" description="In isoform 2." evidence="10 11">
    <location>
        <begin position="1"/>
        <end position="21"/>
    </location>
</feature>
<feature type="splice variant" id="VSP_032909" description="In isoform 2." evidence="10 11">
    <location>
        <position position="557"/>
    </location>
</feature>
<feature type="splice variant" id="VSP_032910" description="In isoform 5." evidence="11">
    <original>SKSYSTDDEDDSLQNPGKEGG</original>
    <variation>MDFFSLHFKTWAVTMSSCHQR</variation>
    <location>
        <begin position="564"/>
        <end position="584"/>
    </location>
</feature>
<feature type="splice variant" id="VSP_032911" description="In isoform 2 and isoform 5." evidence="10 11">
    <location>
        <begin position="863"/>
        <end position="882"/>
    </location>
</feature>
<feature type="splice variant" id="VSP_032912" description="In isoform 3 and isoform 5." evidence="11 12">
    <original>AGDKDDRRKGAATRKDPHFSNFNKKLSSSSSALLHKDANQGPTASVSNPEQCGGRGAKSERIKPNMTNDCQEN</original>
    <variation>DLNRKQRKQETRMTEEREPQLEKTHIFQISTKSYPPPPVRSSTKMPTKGQLPVYQTQNSVEDEVQRVRGSNQI</variation>
    <location>
        <begin position="1001"/>
        <end position="1073"/>
    </location>
</feature>
<feature type="splice variant" id="VSP_032913" description="In isoform 4." evidence="12">
    <original>AGD</original>
    <variation>VQI</variation>
    <location>
        <begin position="1001"/>
        <end position="1003"/>
    </location>
</feature>
<feature type="splice variant" id="VSP_032914" description="In isoform 4." evidence="12">
    <location>
        <begin position="1004"/>
        <end position="1682"/>
    </location>
</feature>
<feature type="splice variant" id="VSP_032915" description="In isoform 3 and isoform 5." evidence="11 12">
    <location>
        <begin position="1074"/>
        <end position="1682"/>
    </location>
</feature>
<feature type="sequence conflict" description="In Ref. 3; BAD32373." evidence="13" ref="3">
    <original>VETINKHAFVKNE</original>
    <variation>AIDRPWLCCCSLR</variation>
    <location>
        <begin position="373"/>
        <end position="385"/>
    </location>
</feature>
<feature type="sequence conflict" description="In Ref. 3; BAD32373." evidence="13" ref="3">
    <original>H</original>
    <variation>D</variation>
    <location>
        <position position="523"/>
    </location>
</feature>